<protein>
    <recommendedName>
        <fullName evidence="1">Dihydroorotate dehydrogenase (quinone)</fullName>
        <ecNumber evidence="1">1.3.5.2</ecNumber>
    </recommendedName>
    <alternativeName>
        <fullName evidence="1">DHOdehase</fullName>
        <shortName evidence="1">DHOD</shortName>
        <shortName evidence="1">DHODase</shortName>
    </alternativeName>
    <alternativeName>
        <fullName evidence="1">Dihydroorotate oxidase</fullName>
    </alternativeName>
</protein>
<gene>
    <name evidence="1" type="primary">pyrD</name>
    <name type="ordered locus">SGR_6052</name>
</gene>
<feature type="chain" id="PRO_1000100291" description="Dihydroorotate dehydrogenase (quinone)">
    <location>
        <begin position="1"/>
        <end position="370"/>
    </location>
</feature>
<feature type="active site" description="Nucleophile" evidence="1">
    <location>
        <position position="182"/>
    </location>
</feature>
<feature type="binding site" evidence="1">
    <location>
        <begin position="67"/>
        <end position="71"/>
    </location>
    <ligand>
        <name>FMN</name>
        <dbReference type="ChEBI" id="CHEBI:58210"/>
    </ligand>
</feature>
<feature type="binding site" evidence="1">
    <location>
        <position position="71"/>
    </location>
    <ligand>
        <name>substrate</name>
    </ligand>
</feature>
<feature type="binding site" evidence="1">
    <location>
        <position position="91"/>
    </location>
    <ligand>
        <name>FMN</name>
        <dbReference type="ChEBI" id="CHEBI:58210"/>
    </ligand>
</feature>
<feature type="binding site" evidence="1">
    <location>
        <begin position="116"/>
        <end position="120"/>
    </location>
    <ligand>
        <name>substrate</name>
    </ligand>
</feature>
<feature type="binding site" evidence="1">
    <location>
        <position position="146"/>
    </location>
    <ligand>
        <name>FMN</name>
        <dbReference type="ChEBI" id="CHEBI:58210"/>
    </ligand>
</feature>
<feature type="binding site" evidence="1">
    <location>
        <position position="179"/>
    </location>
    <ligand>
        <name>FMN</name>
        <dbReference type="ChEBI" id="CHEBI:58210"/>
    </ligand>
</feature>
<feature type="binding site" evidence="1">
    <location>
        <position position="179"/>
    </location>
    <ligand>
        <name>substrate</name>
    </ligand>
</feature>
<feature type="binding site" evidence="1">
    <location>
        <position position="184"/>
    </location>
    <ligand>
        <name>substrate</name>
    </ligand>
</feature>
<feature type="binding site" evidence="1">
    <location>
        <position position="222"/>
    </location>
    <ligand>
        <name>FMN</name>
        <dbReference type="ChEBI" id="CHEBI:58210"/>
    </ligand>
</feature>
<feature type="binding site" evidence="1">
    <location>
        <position position="250"/>
    </location>
    <ligand>
        <name>FMN</name>
        <dbReference type="ChEBI" id="CHEBI:58210"/>
    </ligand>
</feature>
<feature type="binding site" evidence="1">
    <location>
        <begin position="251"/>
        <end position="252"/>
    </location>
    <ligand>
        <name>substrate</name>
    </ligand>
</feature>
<feature type="binding site" evidence="1">
    <location>
        <position position="276"/>
    </location>
    <ligand>
        <name>FMN</name>
        <dbReference type="ChEBI" id="CHEBI:58210"/>
    </ligand>
</feature>
<feature type="binding site" evidence="1">
    <location>
        <position position="305"/>
    </location>
    <ligand>
        <name>FMN</name>
        <dbReference type="ChEBI" id="CHEBI:58210"/>
    </ligand>
</feature>
<feature type="binding site" evidence="1">
    <location>
        <begin position="326"/>
        <end position="327"/>
    </location>
    <ligand>
        <name>FMN</name>
        <dbReference type="ChEBI" id="CHEBI:58210"/>
    </ligand>
</feature>
<name>PYRD_STRGG</name>
<reference key="1">
    <citation type="journal article" date="2008" name="J. Bacteriol.">
        <title>Genome sequence of the streptomycin-producing microorganism Streptomyces griseus IFO 13350.</title>
        <authorList>
            <person name="Ohnishi Y."/>
            <person name="Ishikawa J."/>
            <person name="Hara H."/>
            <person name="Suzuki H."/>
            <person name="Ikenoya M."/>
            <person name="Ikeda H."/>
            <person name="Yamashita A."/>
            <person name="Hattori M."/>
            <person name="Horinouchi S."/>
        </authorList>
    </citation>
    <scope>NUCLEOTIDE SEQUENCE [LARGE SCALE GENOMIC DNA]</scope>
    <source>
        <strain>JCM 4626 / CBS 651.72 / NBRC 13350 / KCC S-0626 / ISP 5235</strain>
    </source>
</reference>
<evidence type="ECO:0000255" key="1">
    <source>
        <dbReference type="HAMAP-Rule" id="MF_00225"/>
    </source>
</evidence>
<accession>B1W464</accession>
<organism>
    <name type="scientific">Streptomyces griseus subsp. griseus (strain JCM 4626 / CBS 651.72 / NBRC 13350 / KCC S-0626 / ISP 5235)</name>
    <dbReference type="NCBI Taxonomy" id="455632"/>
    <lineage>
        <taxon>Bacteria</taxon>
        <taxon>Bacillati</taxon>
        <taxon>Actinomycetota</taxon>
        <taxon>Actinomycetes</taxon>
        <taxon>Kitasatosporales</taxon>
        <taxon>Streptomycetaceae</taxon>
        <taxon>Streptomyces</taxon>
    </lineage>
</organism>
<comment type="function">
    <text evidence="1">Catalyzes the conversion of dihydroorotate to orotate with quinone as electron acceptor.</text>
</comment>
<comment type="catalytic activity">
    <reaction evidence="1">
        <text>(S)-dihydroorotate + a quinone = orotate + a quinol</text>
        <dbReference type="Rhea" id="RHEA:30187"/>
        <dbReference type="ChEBI" id="CHEBI:24646"/>
        <dbReference type="ChEBI" id="CHEBI:30839"/>
        <dbReference type="ChEBI" id="CHEBI:30864"/>
        <dbReference type="ChEBI" id="CHEBI:132124"/>
        <dbReference type="EC" id="1.3.5.2"/>
    </reaction>
</comment>
<comment type="cofactor">
    <cofactor evidence="1">
        <name>FMN</name>
        <dbReference type="ChEBI" id="CHEBI:58210"/>
    </cofactor>
    <text evidence="1">Binds 1 FMN per subunit.</text>
</comment>
<comment type="pathway">
    <text evidence="1">Pyrimidine metabolism; UMP biosynthesis via de novo pathway; orotate from (S)-dihydroorotate (quinone route): step 1/1.</text>
</comment>
<comment type="subunit">
    <text evidence="1">Monomer.</text>
</comment>
<comment type="subcellular location">
    <subcellularLocation>
        <location evidence="1">Cell membrane</location>
        <topology evidence="1">Peripheral membrane protein</topology>
    </subcellularLocation>
</comment>
<comment type="similarity">
    <text evidence="1">Belongs to the dihydroorotate dehydrogenase family. Type 2 subfamily.</text>
</comment>
<keyword id="KW-1003">Cell membrane</keyword>
<keyword id="KW-0285">Flavoprotein</keyword>
<keyword id="KW-0288">FMN</keyword>
<keyword id="KW-0472">Membrane</keyword>
<keyword id="KW-0560">Oxidoreductase</keyword>
<keyword id="KW-0665">Pyrimidine biosynthesis</keyword>
<dbReference type="EC" id="1.3.5.2" evidence="1"/>
<dbReference type="EMBL" id="AP009493">
    <property type="protein sequence ID" value="BAG22881.1"/>
    <property type="molecule type" value="Genomic_DNA"/>
</dbReference>
<dbReference type="RefSeq" id="WP_003970365.1">
    <property type="nucleotide sequence ID" value="NC_010572.1"/>
</dbReference>
<dbReference type="SMR" id="B1W464"/>
<dbReference type="KEGG" id="sgr:SGR_6052"/>
<dbReference type="eggNOG" id="COG0167">
    <property type="taxonomic scope" value="Bacteria"/>
</dbReference>
<dbReference type="HOGENOM" id="CLU_013640_2_0_11"/>
<dbReference type="UniPathway" id="UPA00070">
    <property type="reaction ID" value="UER00946"/>
</dbReference>
<dbReference type="Proteomes" id="UP000001685">
    <property type="component" value="Chromosome"/>
</dbReference>
<dbReference type="GO" id="GO:0005737">
    <property type="term" value="C:cytoplasm"/>
    <property type="evidence" value="ECO:0007669"/>
    <property type="project" value="InterPro"/>
</dbReference>
<dbReference type="GO" id="GO:0005886">
    <property type="term" value="C:plasma membrane"/>
    <property type="evidence" value="ECO:0007669"/>
    <property type="project" value="UniProtKB-SubCell"/>
</dbReference>
<dbReference type="GO" id="GO:0106430">
    <property type="term" value="F:dihydroorotate dehydrogenase (quinone) activity"/>
    <property type="evidence" value="ECO:0007669"/>
    <property type="project" value="UniProtKB-EC"/>
</dbReference>
<dbReference type="GO" id="GO:0006207">
    <property type="term" value="P:'de novo' pyrimidine nucleobase biosynthetic process"/>
    <property type="evidence" value="ECO:0007669"/>
    <property type="project" value="InterPro"/>
</dbReference>
<dbReference type="GO" id="GO:0044205">
    <property type="term" value="P:'de novo' UMP biosynthetic process"/>
    <property type="evidence" value="ECO:0007669"/>
    <property type="project" value="UniProtKB-UniRule"/>
</dbReference>
<dbReference type="CDD" id="cd04738">
    <property type="entry name" value="DHOD_2_like"/>
    <property type="match status" value="1"/>
</dbReference>
<dbReference type="FunFam" id="3.20.20.70:FF:000123">
    <property type="entry name" value="Dihydroorotate dehydrogenase (quinone)"/>
    <property type="match status" value="1"/>
</dbReference>
<dbReference type="Gene3D" id="3.20.20.70">
    <property type="entry name" value="Aldolase class I"/>
    <property type="match status" value="1"/>
</dbReference>
<dbReference type="HAMAP" id="MF_00225">
    <property type="entry name" value="DHO_dh_type2"/>
    <property type="match status" value="1"/>
</dbReference>
<dbReference type="InterPro" id="IPR013785">
    <property type="entry name" value="Aldolase_TIM"/>
</dbReference>
<dbReference type="InterPro" id="IPR050074">
    <property type="entry name" value="DHO_dehydrogenase"/>
</dbReference>
<dbReference type="InterPro" id="IPR005719">
    <property type="entry name" value="Dihydroorotate_DH_2"/>
</dbReference>
<dbReference type="InterPro" id="IPR005720">
    <property type="entry name" value="Dihydroorotate_DH_cat"/>
</dbReference>
<dbReference type="InterPro" id="IPR001295">
    <property type="entry name" value="Dihydroorotate_DH_CS"/>
</dbReference>
<dbReference type="NCBIfam" id="NF003645">
    <property type="entry name" value="PRK05286.1-2"/>
    <property type="match status" value="1"/>
</dbReference>
<dbReference type="NCBIfam" id="NF003648">
    <property type="entry name" value="PRK05286.2-1"/>
    <property type="match status" value="1"/>
</dbReference>
<dbReference type="NCBIfam" id="NF003652">
    <property type="entry name" value="PRK05286.2-5"/>
    <property type="match status" value="1"/>
</dbReference>
<dbReference type="NCBIfam" id="TIGR01036">
    <property type="entry name" value="pyrD_sub2"/>
    <property type="match status" value="1"/>
</dbReference>
<dbReference type="PANTHER" id="PTHR48109:SF4">
    <property type="entry name" value="DIHYDROOROTATE DEHYDROGENASE (QUINONE), MITOCHONDRIAL"/>
    <property type="match status" value="1"/>
</dbReference>
<dbReference type="PANTHER" id="PTHR48109">
    <property type="entry name" value="DIHYDROOROTATE DEHYDROGENASE (QUINONE), MITOCHONDRIAL-RELATED"/>
    <property type="match status" value="1"/>
</dbReference>
<dbReference type="Pfam" id="PF01180">
    <property type="entry name" value="DHO_dh"/>
    <property type="match status" value="1"/>
</dbReference>
<dbReference type="SUPFAM" id="SSF51395">
    <property type="entry name" value="FMN-linked oxidoreductases"/>
    <property type="match status" value="1"/>
</dbReference>
<dbReference type="PROSITE" id="PS00912">
    <property type="entry name" value="DHODEHASE_2"/>
    <property type="match status" value="1"/>
</dbReference>
<proteinExistence type="inferred from homology"/>
<sequence length="370" mass="39616">MYKIFFRLVFKRMDPERAHYAAFRWIRLAARIPVLRTFVAAALAPRHKELRTEALGLRMHGPFGLAAGFDKNAIAIDGMAMLGFDHVEIGTVTGEPQPGNPKKRLFRLVADRALINRMGFNNEGSAAVAARLAARNPVFRTTVGVNIGKTKVVPEDEAAADYVKSTERLAAHADYLVVNVSSPNTPGLRNLQATESLRPLLTAVREAADRTVTTRRVPLLVKIAPDLADEDVDAVADLAVELGLDGVIATNTTVAREGLGLKSHPDLVGEAGGLSGAPLKDRSLEVLSRLYARVGDRITLVGVGGVENAEDAWQRILAGATLVQGYSAFIYEGPAYARAIHQGLAARLAASPYATLAEAVGAETRKQAAA</sequence>